<name>PFD2_MOUSE</name>
<proteinExistence type="evidence at protein level"/>
<evidence type="ECO:0000250" key="1">
    <source>
        <dbReference type="UniProtKB" id="P40005"/>
    </source>
</evidence>
<evidence type="ECO:0000250" key="2">
    <source>
        <dbReference type="UniProtKB" id="Q9UHV9"/>
    </source>
</evidence>
<evidence type="ECO:0000256" key="3">
    <source>
        <dbReference type="SAM" id="MobiDB-lite"/>
    </source>
</evidence>
<evidence type="ECO:0000305" key="4"/>
<organism>
    <name type="scientific">Mus musculus</name>
    <name type="common">Mouse</name>
    <dbReference type="NCBI Taxonomy" id="10090"/>
    <lineage>
        <taxon>Eukaryota</taxon>
        <taxon>Metazoa</taxon>
        <taxon>Chordata</taxon>
        <taxon>Craniata</taxon>
        <taxon>Vertebrata</taxon>
        <taxon>Euteleostomi</taxon>
        <taxon>Mammalia</taxon>
        <taxon>Eutheria</taxon>
        <taxon>Euarchontoglires</taxon>
        <taxon>Glires</taxon>
        <taxon>Rodentia</taxon>
        <taxon>Myomorpha</taxon>
        <taxon>Muroidea</taxon>
        <taxon>Muridae</taxon>
        <taxon>Murinae</taxon>
        <taxon>Mus</taxon>
        <taxon>Mus</taxon>
    </lineage>
</organism>
<accession>O70591</accession>
<accession>Q8R0H2</accession>
<protein>
    <recommendedName>
        <fullName>Prefoldin subunit 2</fullName>
    </recommendedName>
</protein>
<dbReference type="EMBL" id="Y17393">
    <property type="protein sequence ID" value="CAA76760.1"/>
    <property type="molecule type" value="mRNA"/>
</dbReference>
<dbReference type="EMBL" id="BC026839">
    <property type="protein sequence ID" value="AAH26839.1"/>
    <property type="molecule type" value="mRNA"/>
</dbReference>
<dbReference type="EMBL" id="BC049606">
    <property type="protein sequence ID" value="AAH49606.1"/>
    <property type="molecule type" value="mRNA"/>
</dbReference>
<dbReference type="CCDS" id="CCDS15491.1"/>
<dbReference type="RefSeq" id="NP_035200.2">
    <property type="nucleotide sequence ID" value="NM_011070.3"/>
</dbReference>
<dbReference type="SMR" id="O70591"/>
<dbReference type="BioGRID" id="202121">
    <property type="interactions" value="49"/>
</dbReference>
<dbReference type="FunCoup" id="O70591">
    <property type="interactions" value="2473"/>
</dbReference>
<dbReference type="IntAct" id="O70591">
    <property type="interactions" value="30"/>
</dbReference>
<dbReference type="MINT" id="O70591"/>
<dbReference type="STRING" id="10090.ENSMUSP00000120106"/>
<dbReference type="GlyGen" id="O70591">
    <property type="glycosylation" value="1 site, 1 O-linked glycan (1 site)"/>
</dbReference>
<dbReference type="iPTMnet" id="O70591"/>
<dbReference type="PhosphoSitePlus" id="O70591"/>
<dbReference type="REPRODUCTION-2DPAGE" id="IPI00119545"/>
<dbReference type="REPRODUCTION-2DPAGE" id="O70591"/>
<dbReference type="jPOST" id="O70591"/>
<dbReference type="PaxDb" id="10090-ENSMUSP00000120106"/>
<dbReference type="PeptideAtlas" id="O70591"/>
<dbReference type="ProteomicsDB" id="289474"/>
<dbReference type="Pumba" id="O70591"/>
<dbReference type="Antibodypedia" id="34290">
    <property type="antibodies" value="180 antibodies from 28 providers"/>
</dbReference>
<dbReference type="DNASU" id="18637"/>
<dbReference type="Ensembl" id="ENSMUST00000135941.8">
    <property type="protein sequence ID" value="ENSMUSP00000120106.2"/>
    <property type="gene ID" value="ENSMUSG00000006412.11"/>
</dbReference>
<dbReference type="GeneID" id="18637"/>
<dbReference type="KEGG" id="mmu:18637"/>
<dbReference type="UCSC" id="uc007doc.1">
    <property type="organism name" value="mouse"/>
</dbReference>
<dbReference type="AGR" id="MGI:1276111"/>
<dbReference type="CTD" id="5202"/>
<dbReference type="MGI" id="MGI:1276111">
    <property type="gene designation" value="Pfdn2"/>
</dbReference>
<dbReference type="VEuPathDB" id="HostDB:ENSMUSG00000006412"/>
<dbReference type="eggNOG" id="KOG4098">
    <property type="taxonomic scope" value="Eukaryota"/>
</dbReference>
<dbReference type="GeneTree" id="ENSGT00390000009272"/>
<dbReference type="HOGENOM" id="CLU_113004_0_0_1"/>
<dbReference type="InParanoid" id="O70591"/>
<dbReference type="OMA" id="CFKMIGG"/>
<dbReference type="OrthoDB" id="29646at2759"/>
<dbReference type="PhylomeDB" id="O70591"/>
<dbReference type="TreeFam" id="TF313252"/>
<dbReference type="BioGRID-ORCS" id="18637">
    <property type="hits" value="23 hits in 79 CRISPR screens"/>
</dbReference>
<dbReference type="ChiTaRS" id="Pfdn2">
    <property type="organism name" value="mouse"/>
</dbReference>
<dbReference type="PRO" id="PR:O70591"/>
<dbReference type="Proteomes" id="UP000000589">
    <property type="component" value="Chromosome 1"/>
</dbReference>
<dbReference type="RNAct" id="O70591">
    <property type="molecule type" value="protein"/>
</dbReference>
<dbReference type="Bgee" id="ENSMUSG00000006412">
    <property type="expression patterns" value="Expressed in embryonic brain and 259 other cell types or tissues"/>
</dbReference>
<dbReference type="ExpressionAtlas" id="O70591">
    <property type="expression patterns" value="baseline and differential"/>
</dbReference>
<dbReference type="GO" id="GO:0005829">
    <property type="term" value="C:cytosol"/>
    <property type="evidence" value="ECO:0000304"/>
    <property type="project" value="MGI"/>
</dbReference>
<dbReference type="GO" id="GO:0005739">
    <property type="term" value="C:mitochondrion"/>
    <property type="evidence" value="ECO:0007669"/>
    <property type="project" value="UniProtKB-SubCell"/>
</dbReference>
<dbReference type="GO" id="GO:0005654">
    <property type="term" value="C:nucleoplasm"/>
    <property type="evidence" value="ECO:0007669"/>
    <property type="project" value="Ensembl"/>
</dbReference>
<dbReference type="GO" id="GO:0016272">
    <property type="term" value="C:prefoldin complex"/>
    <property type="evidence" value="ECO:0007669"/>
    <property type="project" value="Ensembl"/>
</dbReference>
<dbReference type="GO" id="GO:1990062">
    <property type="term" value="C:RPAP3/R2TP/prefoldin-like complex"/>
    <property type="evidence" value="ECO:0007669"/>
    <property type="project" value="Ensembl"/>
</dbReference>
<dbReference type="GO" id="GO:0001540">
    <property type="term" value="F:amyloid-beta binding"/>
    <property type="evidence" value="ECO:0007669"/>
    <property type="project" value="Ensembl"/>
</dbReference>
<dbReference type="GO" id="GO:0044183">
    <property type="term" value="F:protein folding chaperone"/>
    <property type="evidence" value="ECO:0007669"/>
    <property type="project" value="Ensembl"/>
</dbReference>
<dbReference type="GO" id="GO:0051082">
    <property type="term" value="F:unfolded protein binding"/>
    <property type="evidence" value="ECO:0007669"/>
    <property type="project" value="Ensembl"/>
</dbReference>
<dbReference type="GO" id="GO:1905907">
    <property type="term" value="P:negative regulation of amyloid fibril formation"/>
    <property type="evidence" value="ECO:0007669"/>
    <property type="project" value="Ensembl"/>
</dbReference>
<dbReference type="GO" id="GO:0051495">
    <property type="term" value="P:positive regulation of cytoskeleton organization"/>
    <property type="evidence" value="ECO:0007669"/>
    <property type="project" value="Ensembl"/>
</dbReference>
<dbReference type="GO" id="GO:0006457">
    <property type="term" value="P:protein folding"/>
    <property type="evidence" value="ECO:0000314"/>
    <property type="project" value="MGI"/>
</dbReference>
<dbReference type="CDD" id="cd23163">
    <property type="entry name" value="Prefoldin_2"/>
    <property type="match status" value="1"/>
</dbReference>
<dbReference type="FunFam" id="1.10.287.370:FF:000002">
    <property type="entry name" value="Prefoldin subunit 2"/>
    <property type="match status" value="1"/>
</dbReference>
<dbReference type="Gene3D" id="1.10.287.370">
    <property type="match status" value="1"/>
</dbReference>
<dbReference type="InterPro" id="IPR027235">
    <property type="entry name" value="PFD2"/>
</dbReference>
<dbReference type="InterPro" id="IPR002777">
    <property type="entry name" value="PFD_beta-like"/>
</dbReference>
<dbReference type="InterPro" id="IPR009053">
    <property type="entry name" value="Prefoldin"/>
</dbReference>
<dbReference type="PANTHER" id="PTHR13303">
    <property type="entry name" value="PREFOLDIN SUBUNIT 2"/>
    <property type="match status" value="1"/>
</dbReference>
<dbReference type="Pfam" id="PF01920">
    <property type="entry name" value="Prefoldin_2"/>
    <property type="match status" value="1"/>
</dbReference>
<dbReference type="SUPFAM" id="SSF46579">
    <property type="entry name" value="Prefoldin"/>
    <property type="match status" value="1"/>
</dbReference>
<reference key="1">
    <citation type="journal article" date="1998" name="Cell">
        <title>Prefoldin, a chaperone that delivers unfolded proteins to cytosolic chaperonin.</title>
        <authorList>
            <person name="Vainberg I.E."/>
            <person name="Lewis S.A."/>
            <person name="Rommelaere H."/>
            <person name="Ampe C."/>
            <person name="Vandekerckhove J."/>
            <person name="Klein H.L."/>
            <person name="Cowan N.J."/>
        </authorList>
    </citation>
    <scope>NUCLEOTIDE SEQUENCE [MRNA]</scope>
</reference>
<reference key="2">
    <citation type="journal article" date="2004" name="Genome Res.">
        <title>The status, quality, and expansion of the NIH full-length cDNA project: the Mammalian Gene Collection (MGC).</title>
        <authorList>
            <consortium name="The MGC Project Team"/>
        </authorList>
    </citation>
    <scope>NUCLEOTIDE SEQUENCE [LARGE SCALE MRNA]</scope>
    <source>
        <tissue>Brain</tissue>
        <tissue>Colon</tissue>
    </source>
</reference>
<reference key="3">
    <citation type="journal article" date="2010" name="Cell">
        <title>A tissue-specific atlas of mouse protein phosphorylation and expression.</title>
        <authorList>
            <person name="Huttlin E.L."/>
            <person name="Jedrychowski M.P."/>
            <person name="Elias J.E."/>
            <person name="Goswami T."/>
            <person name="Rad R."/>
            <person name="Beausoleil S.A."/>
            <person name="Villen J."/>
            <person name="Haas W."/>
            <person name="Sowa M.E."/>
            <person name="Gygi S.P."/>
        </authorList>
    </citation>
    <scope>IDENTIFICATION BY MASS SPECTROMETRY [LARGE SCALE ANALYSIS]</scope>
    <source>
        <tissue>Brain</tissue>
        <tissue>Brown adipose tissue</tissue>
        <tissue>Heart</tissue>
        <tissue>Kidney</tissue>
        <tissue>Liver</tissue>
        <tissue>Lung</tissue>
        <tissue>Pancreas</tissue>
        <tissue>Spleen</tissue>
        <tissue>Testis</tissue>
    </source>
</reference>
<sequence length="154" mass="16534">MADSSGRVGKSGGSGAGKGAVSAEQVIAGFNRLRQEQRGLASKAAELEMELNEHSLVIDTLKEVDETRKCYRMVGGVLVERTVKEVLPALEGNKEQIQKIIETLSQQLQAKGKELNEFREKHNIRLMGEDEKPAAKENSEGAGAKASSAGVLVS</sequence>
<gene>
    <name type="primary">Pfdn2</name>
    <name type="synonym">Pfd2</name>
</gene>
<keyword id="KW-0143">Chaperone</keyword>
<keyword id="KW-0963">Cytoplasm</keyword>
<keyword id="KW-0496">Mitochondrion</keyword>
<keyword id="KW-0539">Nucleus</keyword>
<keyword id="KW-1185">Reference proteome</keyword>
<feature type="chain" id="PRO_0000124836" description="Prefoldin subunit 2">
    <location>
        <begin position="1"/>
        <end position="154"/>
    </location>
</feature>
<feature type="region of interest" description="Disordered" evidence="3">
    <location>
        <begin position="1"/>
        <end position="20"/>
    </location>
</feature>
<feature type="region of interest" description="Disordered" evidence="3">
    <location>
        <begin position="126"/>
        <end position="154"/>
    </location>
</feature>
<feature type="compositionally biased region" description="Gly residues" evidence="3">
    <location>
        <begin position="9"/>
        <end position="18"/>
    </location>
</feature>
<feature type="compositionally biased region" description="Basic and acidic residues" evidence="3">
    <location>
        <begin position="126"/>
        <end position="139"/>
    </location>
</feature>
<feature type="compositionally biased region" description="Low complexity" evidence="3">
    <location>
        <begin position="140"/>
        <end position="154"/>
    </location>
</feature>
<feature type="sequence conflict" description="In Ref. 1; CAA76760." evidence="4" ref="1">
    <original>SGAG</original>
    <variation>TARW</variation>
    <location>
        <begin position="14"/>
        <end position="17"/>
    </location>
</feature>
<comment type="function">
    <text>Binds specifically to cytosolic chaperonin (c-CPN) and transfers target proteins to it. Binds to nascent polypeptide chain and promotes folding in an environment in which there are many competing pathways for nonnative proteins.</text>
</comment>
<comment type="subunit">
    <text evidence="1 2">Heterohexamer of two PFD-alpha type and four PFD-beta type subunits. Component of the PAQosome complex which is responsible for the biogenesis of several protein complexes and which consists of R2TP complex members RUVBL1, RUVBL2, RPAP3 and PIH1D1, URI complex members PFDN2, PFDN6, PDRG1, UXT and URI1 as well as ASDURF, POLR2E and DNAAF10/WDR92. Interacts with URI1; the interaction is phosphorylation-dependent and occurs in a growth-dependent manner.</text>
</comment>
<comment type="subcellular location">
    <subcellularLocation>
        <location evidence="2">Nucleus</location>
    </subcellularLocation>
    <subcellularLocation>
        <location evidence="2">Cytoplasm</location>
    </subcellularLocation>
    <subcellularLocation>
        <location evidence="2">Mitochondrion</location>
    </subcellularLocation>
</comment>
<comment type="similarity">
    <text evidence="4">Belongs to the prefoldin subunit beta family.</text>
</comment>